<keyword id="KW-0175">Coiled coil</keyword>
<keyword id="KW-1185">Reference proteome</keyword>
<reference evidence="7" key="1">
    <citation type="journal article" date="2014" name="BMC Biol.">
        <title>A comprehensive evaluation of rodent malaria parasite genomes and gene expression.</title>
        <authorList>
            <person name="Otto T.D."/>
            <person name="Bohme U."/>
            <person name="Jackson A.P."/>
            <person name="Hunt M."/>
            <person name="Franke-Fayard B."/>
            <person name="Hoeijmakers W.A."/>
            <person name="Religa A.A."/>
            <person name="Robertson L."/>
            <person name="Sanders M."/>
            <person name="Ogun S.A."/>
            <person name="Cunningham D."/>
            <person name="Erhart A."/>
            <person name="Billker O."/>
            <person name="Khan S.M."/>
            <person name="Stunnenberg H.G."/>
            <person name="Langhorne J."/>
            <person name="Holder A.A."/>
            <person name="Waters A.P."/>
            <person name="Newbold C.I."/>
            <person name="Pain A."/>
            <person name="Berriman M."/>
            <person name="Janse C.J."/>
        </authorList>
    </citation>
    <scope>NUCLEOTIDE SEQUENCE [LARGE SCALE GENOMIC DNA]</scope>
    <source>
        <strain evidence="7">ANKA</strain>
    </source>
</reference>
<reference evidence="5" key="2">
    <citation type="journal article" date="2022" name="PLoS Pathog.">
        <title>Identification of a novel AP2 transcription factor in zygotes with an essential role in Plasmodium ookinete development.</title>
        <authorList>
            <person name="Nishi T."/>
            <person name="Kaneko I."/>
            <person name="Iwanaga S."/>
            <person name="Yuda M."/>
        </authorList>
    </citation>
    <scope>FUNCTION</scope>
    <scope>DEVELOPMENTAL STAGE</scope>
    <scope>DISRUPTION PHENOTYPE</scope>
</reference>
<sequence>MNRTHMPNNHKIHEGINMKSSINEVKKSKRIEKELSYVTNSTKKKSKKKQTNIKKIGDVSVNIENINIPNNLNLYTDNESVVSSKYKKKKKKKKKLNIYNNNDNSKYLKPQVVKKKNSKIIFLHHNENNTSTHSGESSKFQKLKKKKKIKKGTKKKSINKISILKHKSHESFPSTQNENTPELEPKQVNLSPLEIEINKTNDIDKHGLEINKTPSTQNFNDPINNLDNNEKIKDRGLFHGIDNIYENYITNDKENMQSVIKNRHYIIDKNEQNEQAYNNDMNITNFIKNGNTNKNSNNDKSANSNDYNKNLFCELTEAIENDGIEQTCNRNINIRLKEEKEAEEEERKKNEDEHILENGKSNNEDNSFDKKDDLTNLGKSFKNNESFELNSPQKNIRKGSLDGMRKKKISEKKMKTKIKQKKKRQNNINDTTIGKKKIYIKENNNERKSSGLILGFKKMKKKLSGKRIDQKKEYKEKEIYSDKLKDVIKDKKKYKKKDIDDISFTKDIVKENVKGVDRDDDEKKRKTIGQDEEKEKIEIIIVKKNETGTEEEIKVETDENPKVKTKEKCKIENGEGCKIAIDEENSVFVEAENMKNEAKLEADVIIIEDAELRKDEEEDKSKNNEKDSKSEERDILETQMAGKEEKPVLKKKKKNKGKQRNREGKGVVEKGYDAKREKKENEEKNKANTKMEPNDSIEQKDKLSNVQNMSNIVKNNKVNKILEKYIISKKEENLKRKYMNTKKFMDILDISEKKFKIDTINFFPHTIGQVCYSDIYFFFDTYEKELKKSNTGKNTIKLMKKLFKCEYIEMNNMELILQIFDKIIDKLKKELKTESIVKIYDEEEHVIASKIMKYKNGNYDKYMYNKKKYDSNNEYSISENNLFNQNPLHHQNNLFGCNRNKLYNIIFNSSQGEYIMGSHSFLILQQWNDEYKLAMLRDKLEQIKKRKQNMNDPIAKYIKSLKYGFIDSLFSICCLYDCKKNDNDASYCDFPLPSQNTFYTNTQIHLDNMNLNSERILPMKITKAVQILASS</sequence>
<accession>A0A509AIR7</accession>
<protein>
    <recommendedName>
        <fullName evidence="4">Ookinete maturation protein 1</fullName>
    </recommendedName>
</protein>
<gene>
    <name evidence="4" type="primary">OMG1</name>
    <name evidence="6" type="ORF">PBANKA_0508300</name>
</gene>
<organism evidence="7">
    <name type="scientific">Plasmodium berghei (strain Anka)</name>
    <dbReference type="NCBI Taxonomy" id="5823"/>
    <lineage>
        <taxon>Eukaryota</taxon>
        <taxon>Sar</taxon>
        <taxon>Alveolata</taxon>
        <taxon>Apicomplexa</taxon>
        <taxon>Aconoidasida</taxon>
        <taxon>Haemosporida</taxon>
        <taxon>Plasmodiidae</taxon>
        <taxon>Plasmodium</taxon>
        <taxon>Plasmodium (Vinckeia)</taxon>
    </lineage>
</organism>
<evidence type="ECO:0000255" key="1"/>
<evidence type="ECO:0000256" key="2">
    <source>
        <dbReference type="SAM" id="MobiDB-lite"/>
    </source>
</evidence>
<evidence type="ECO:0000269" key="3">
    <source>
    </source>
</evidence>
<evidence type="ECO:0000303" key="4">
    <source>
    </source>
</evidence>
<evidence type="ECO:0000305" key="5"/>
<evidence type="ECO:0000312" key="6">
    <source>
        <dbReference type="EMBL" id="VUC54495.1"/>
    </source>
</evidence>
<evidence type="ECO:0000312" key="7">
    <source>
        <dbReference type="Proteomes" id="UP000074855"/>
    </source>
</evidence>
<dbReference type="EMBL" id="LK023120">
    <property type="protein sequence ID" value="VUC54495.1"/>
    <property type="molecule type" value="Genomic_DNA"/>
</dbReference>
<dbReference type="FunCoup" id="A0A509AIR7">
    <property type="interactions" value="43"/>
</dbReference>
<dbReference type="STRING" id="5823.A0A509AIR7"/>
<dbReference type="VEuPathDB" id="PlasmoDB:PBANKA_0508300"/>
<dbReference type="InParanoid" id="A0A509AIR7"/>
<dbReference type="OMA" id="CNYDKQS"/>
<dbReference type="Proteomes" id="UP000074855">
    <property type="component" value="Chromosome 5"/>
</dbReference>
<dbReference type="GO" id="GO:0044114">
    <property type="term" value="P:development of symbiont in host"/>
    <property type="evidence" value="ECO:0000315"/>
    <property type="project" value="UniProtKB"/>
</dbReference>
<proteinExistence type="evidence at transcript level"/>
<comment type="function">
    <text evidence="3">In the mosquito vector midgut, plays a role in ookinete development.</text>
</comment>
<comment type="developmental stage">
    <text evidence="3">Expressed around 6 hours after fertilization. Expression increases in retort-form ookinetes and continues in mature ookinetes (PubMed:35947628). Not expressed in male or female gametocytes (PubMed:35947628).</text>
</comment>
<comment type="disruption phenotype">
    <text evidence="3">Both female and male gametocytes appear normal and fertilization proceeds normally (PubMed:35947628). Meiosis is normal (PubMed:35947628). However, ookinete maturation is delayed (PubMed:35947628). In A.stephensi mosquito fed on mice infected with knockout parasites, the number of oocysts in the mosquito midgut is reduced (PubMed:35947628).</text>
</comment>
<name>OMG1_PLABA</name>
<feature type="chain" id="PRO_0000457163" description="Ookinete maturation protein 1">
    <location>
        <begin position="1"/>
        <end position="1031"/>
    </location>
</feature>
<feature type="region of interest" description="Disordered" evidence="2">
    <location>
        <begin position="125"/>
        <end position="184"/>
    </location>
</feature>
<feature type="region of interest" description="Disordered" evidence="2">
    <location>
        <begin position="340"/>
        <end position="405"/>
    </location>
</feature>
<feature type="region of interest" description="Disordered" evidence="2">
    <location>
        <begin position="609"/>
        <end position="697"/>
    </location>
</feature>
<feature type="coiled-coil region" evidence="1">
    <location>
        <begin position="581"/>
        <end position="646"/>
    </location>
</feature>
<feature type="compositionally biased region" description="Basic residues" evidence="2">
    <location>
        <begin position="141"/>
        <end position="168"/>
    </location>
</feature>
<feature type="compositionally biased region" description="Polar residues" evidence="2">
    <location>
        <begin position="171"/>
        <end position="180"/>
    </location>
</feature>
<feature type="compositionally biased region" description="Basic and acidic residues" evidence="2">
    <location>
        <begin position="340"/>
        <end position="357"/>
    </location>
</feature>
<feature type="compositionally biased region" description="Polar residues" evidence="2">
    <location>
        <begin position="377"/>
        <end position="394"/>
    </location>
</feature>
<feature type="compositionally biased region" description="Basic and acidic residues" evidence="2">
    <location>
        <begin position="610"/>
        <end position="648"/>
    </location>
</feature>
<feature type="compositionally biased region" description="Basic residues" evidence="2">
    <location>
        <begin position="649"/>
        <end position="659"/>
    </location>
</feature>
<feature type="compositionally biased region" description="Basic and acidic residues" evidence="2">
    <location>
        <begin position="660"/>
        <end position="686"/>
    </location>
</feature>